<gene>
    <name type="primary">Olr1</name>
    <name type="synonym">Lox1</name>
    <name type="synonym">Oldlr1</name>
</gene>
<proteinExistence type="evidence at transcript level"/>
<dbReference type="EMBL" id="AB005900">
    <property type="protein sequence ID" value="BAA25785.1"/>
    <property type="molecule type" value="mRNA"/>
</dbReference>
<dbReference type="EMBL" id="AB018104">
    <property type="protein sequence ID" value="BAA35123.1"/>
    <property type="molecule type" value="Genomic_DNA"/>
</dbReference>
<dbReference type="EMBL" id="BC097290">
    <property type="protein sequence ID" value="AAH97290.1"/>
    <property type="molecule type" value="mRNA"/>
</dbReference>
<dbReference type="RefSeq" id="NP_579840.2">
    <property type="nucleotide sequence ID" value="NM_133306.2"/>
</dbReference>
<dbReference type="SMR" id="O70156"/>
<dbReference type="FunCoup" id="O70156">
    <property type="interactions" value="239"/>
</dbReference>
<dbReference type="STRING" id="10116.ENSRNOP00000071872"/>
<dbReference type="GlyCosmos" id="O70156">
    <property type="glycosylation" value="3 sites, No reported glycans"/>
</dbReference>
<dbReference type="GlyGen" id="O70156">
    <property type="glycosylation" value="3 sites"/>
</dbReference>
<dbReference type="PhosphoSitePlus" id="O70156"/>
<dbReference type="PaxDb" id="10116-ENSRNOP00000011196"/>
<dbReference type="GeneID" id="140914"/>
<dbReference type="KEGG" id="rno:140914"/>
<dbReference type="UCSC" id="RGD:620515">
    <property type="organism name" value="rat"/>
</dbReference>
<dbReference type="AGR" id="RGD:620515"/>
<dbReference type="CTD" id="4973"/>
<dbReference type="RGD" id="620515">
    <property type="gene designation" value="Olr1"/>
</dbReference>
<dbReference type="eggNOG" id="KOG4297">
    <property type="taxonomic scope" value="Eukaryota"/>
</dbReference>
<dbReference type="InParanoid" id="O70156"/>
<dbReference type="OrthoDB" id="6133475at2759"/>
<dbReference type="PhylomeDB" id="O70156"/>
<dbReference type="TreeFam" id="TF336674"/>
<dbReference type="Reactome" id="R-RNO-202733">
    <property type="pathway name" value="Cell surface interactions at the vascular wall"/>
</dbReference>
<dbReference type="Reactome" id="R-RNO-6798695">
    <property type="pathway name" value="Neutrophil degranulation"/>
</dbReference>
<dbReference type="PRO" id="PR:O70156"/>
<dbReference type="Proteomes" id="UP000002494">
    <property type="component" value="Unplaced"/>
</dbReference>
<dbReference type="GO" id="GO:0005576">
    <property type="term" value="C:extracellular region"/>
    <property type="evidence" value="ECO:0007669"/>
    <property type="project" value="UniProtKB-SubCell"/>
</dbReference>
<dbReference type="GO" id="GO:0045121">
    <property type="term" value="C:membrane raft"/>
    <property type="evidence" value="ECO:0007669"/>
    <property type="project" value="UniProtKB-SubCell"/>
</dbReference>
<dbReference type="GO" id="GO:0005886">
    <property type="term" value="C:plasma membrane"/>
    <property type="evidence" value="ECO:0000318"/>
    <property type="project" value="GO_Central"/>
</dbReference>
<dbReference type="GO" id="GO:0043235">
    <property type="term" value="C:receptor complex"/>
    <property type="evidence" value="ECO:0000266"/>
    <property type="project" value="RGD"/>
</dbReference>
<dbReference type="GO" id="GO:0030246">
    <property type="term" value="F:carbohydrate binding"/>
    <property type="evidence" value="ECO:0007669"/>
    <property type="project" value="UniProtKB-KW"/>
</dbReference>
<dbReference type="GO" id="GO:0042802">
    <property type="term" value="F:identical protein binding"/>
    <property type="evidence" value="ECO:0000266"/>
    <property type="project" value="RGD"/>
</dbReference>
<dbReference type="GO" id="GO:0005041">
    <property type="term" value="F:low-density lipoprotein particle receptor activity"/>
    <property type="evidence" value="ECO:0000266"/>
    <property type="project" value="RGD"/>
</dbReference>
<dbReference type="GO" id="GO:0002376">
    <property type="term" value="P:immune system process"/>
    <property type="evidence" value="ECO:0007669"/>
    <property type="project" value="UniProtKB-KW"/>
</dbReference>
<dbReference type="GO" id="GO:0006954">
    <property type="term" value="P:inflammatory response"/>
    <property type="evidence" value="ECO:0007669"/>
    <property type="project" value="UniProtKB-KW"/>
</dbReference>
<dbReference type="GO" id="GO:0007159">
    <property type="term" value="P:leukocyte cell-cell adhesion"/>
    <property type="evidence" value="ECO:0000315"/>
    <property type="project" value="RGD"/>
</dbReference>
<dbReference type="GO" id="GO:0042157">
    <property type="term" value="P:lipoprotein metabolic process"/>
    <property type="evidence" value="ECO:0000315"/>
    <property type="project" value="RGD"/>
</dbReference>
<dbReference type="GO" id="GO:1902894">
    <property type="term" value="P:negative regulation of miRNA transcription"/>
    <property type="evidence" value="ECO:0000315"/>
    <property type="project" value="BHF-UCL"/>
</dbReference>
<dbReference type="GO" id="GO:0032930">
    <property type="term" value="P:positive regulation of superoxide anion generation"/>
    <property type="evidence" value="ECO:0000266"/>
    <property type="project" value="RGD"/>
</dbReference>
<dbReference type="GO" id="GO:0042542">
    <property type="term" value="P:response to hydrogen peroxide"/>
    <property type="evidence" value="ECO:0000270"/>
    <property type="project" value="RGD"/>
</dbReference>
<dbReference type="GO" id="GO:0042310">
    <property type="term" value="P:vasoconstriction"/>
    <property type="evidence" value="ECO:0000266"/>
    <property type="project" value="RGD"/>
</dbReference>
<dbReference type="CDD" id="cd03593">
    <property type="entry name" value="CLECT_NK_receptors_like"/>
    <property type="match status" value="1"/>
</dbReference>
<dbReference type="FunFam" id="3.10.100.10:FF:000079">
    <property type="entry name" value="Oxidized low-density lipoprotein receptor 1"/>
    <property type="match status" value="1"/>
</dbReference>
<dbReference type="Gene3D" id="3.10.100.10">
    <property type="entry name" value="Mannose-Binding Protein A, subunit A"/>
    <property type="match status" value="1"/>
</dbReference>
<dbReference type="InterPro" id="IPR001304">
    <property type="entry name" value="C-type_lectin-like"/>
</dbReference>
<dbReference type="InterPro" id="IPR016186">
    <property type="entry name" value="C-type_lectin-like/link_sf"/>
</dbReference>
<dbReference type="InterPro" id="IPR016187">
    <property type="entry name" value="CTDL_fold"/>
</dbReference>
<dbReference type="InterPro" id="IPR033992">
    <property type="entry name" value="NKR-like_CTLD"/>
</dbReference>
<dbReference type="InterPro" id="IPR052332">
    <property type="entry name" value="OxLDL_rcpt1-like"/>
</dbReference>
<dbReference type="PANTHER" id="PTHR47298">
    <property type="entry name" value="OXIDIZED LOW-DENSITY LIPOPROTEIN RECEPTOR 1"/>
    <property type="match status" value="1"/>
</dbReference>
<dbReference type="PANTHER" id="PTHR47298:SF1">
    <property type="entry name" value="OXIDIZED LOW-DENSITY LIPOPROTEIN RECEPTOR 1"/>
    <property type="match status" value="1"/>
</dbReference>
<dbReference type="Pfam" id="PF00059">
    <property type="entry name" value="Lectin_C"/>
    <property type="match status" value="1"/>
</dbReference>
<dbReference type="SMART" id="SM00034">
    <property type="entry name" value="CLECT"/>
    <property type="match status" value="1"/>
</dbReference>
<dbReference type="SUPFAM" id="SSF56436">
    <property type="entry name" value="C-type lectin-like"/>
    <property type="match status" value="1"/>
</dbReference>
<dbReference type="PROSITE" id="PS50041">
    <property type="entry name" value="C_TYPE_LECTIN_2"/>
    <property type="match status" value="1"/>
</dbReference>
<accession>O70156</accession>
<feature type="chain" id="PRO_0000017451" description="Oxidized low-density lipoprotein receptor 1">
    <location>
        <begin position="1"/>
        <end position="364"/>
    </location>
</feature>
<feature type="chain" id="PRO_0000017452" description="Oxidized low-density lipoprotein receptor 1, soluble form">
    <location>
        <begin status="unknown"/>
        <end position="364"/>
    </location>
</feature>
<feature type="topological domain" description="Cytoplasmic" evidence="2">
    <location>
        <begin position="1"/>
        <end position="31"/>
    </location>
</feature>
<feature type="transmembrane region" description="Helical; Signal-anchor for type II membrane protein" evidence="2">
    <location>
        <begin position="32"/>
        <end position="54"/>
    </location>
</feature>
<feature type="topological domain" description="Extracellular" evidence="2">
    <location>
        <begin position="55"/>
        <end position="364"/>
    </location>
</feature>
<feature type="repeat" description="1">
    <location>
        <begin position="96"/>
        <end position="141"/>
    </location>
</feature>
<feature type="repeat" description="2">
    <location>
        <begin position="142"/>
        <end position="187"/>
    </location>
</feature>
<feature type="repeat" description="3">
    <location>
        <begin position="188"/>
        <end position="233"/>
    </location>
</feature>
<feature type="domain" description="C-type lectin" evidence="3">
    <location>
        <begin position="242"/>
        <end position="355"/>
    </location>
</feature>
<feature type="region of interest" description="Disordered" evidence="4">
    <location>
        <begin position="1"/>
        <end position="21"/>
    </location>
</feature>
<feature type="region of interest" description="Neck">
    <location>
        <begin position="55"/>
        <end position="242"/>
    </location>
</feature>
<feature type="coiled-coil region" evidence="2">
    <location>
        <begin position="83"/>
        <end position="233"/>
    </location>
</feature>
<feature type="lipid moiety-binding region" description="S-palmitoyl cysteine" evidence="1">
    <location>
        <position position="35"/>
    </location>
</feature>
<feature type="lipid moiety-binding region" description="S-palmitoyl cysteine" evidence="1">
    <location>
        <position position="45"/>
    </location>
</feature>
<feature type="glycosylation site" description="N-linked (GlcNAc...) asparagine" evidence="2">
    <location>
        <position position="72"/>
    </location>
</feature>
<feature type="glycosylation site" description="N-linked (GlcNAc...) asparagine" evidence="2">
    <location>
        <position position="92"/>
    </location>
</feature>
<feature type="glycosylation site" description="N-linked (GlcNAc...) asparagine" evidence="2">
    <location>
        <position position="138"/>
    </location>
</feature>
<feature type="disulfide bond" evidence="3">
    <location>
        <begin position="235"/>
        <end position="246"/>
    </location>
</feature>
<feature type="disulfide bond" evidence="3">
    <location>
        <begin position="262"/>
        <end position="354"/>
    </location>
</feature>
<feature type="disulfide bond" evidence="3">
    <location>
        <begin position="333"/>
        <end position="346"/>
    </location>
</feature>
<sequence>MAFDDKMKPVNGQPDQKSCGKKPKGLHLLSSTWWCPAAVTLAILCLVLSVTLIVQQTQLLQVSDLLKQYQANLTQQDHILEGQMSAQKKAENASQESKRELKEQIDTLTWKLNEKSKEQEKLLQQNQNLQEALQRAVNASEESKWELKEQIDILNWKLNGISKEQKELLQQNQNLQEALQKAEKYSEESQRELKEQIDTLSWKLNEKSKEQEELLQQNQNLQEALQRAANSSGPCPQDWIWHKENCYLFHGPFNWEKSRENCLSLDAQLLQISTTDDLNFVLQATSHSTSPFWMGLHRKNPNHPWLWENGSPLSFQFFRTRGVSLQMYSSGTCAYIQGGVVFAENCILTAFSICQKKANLLLTQ</sequence>
<comment type="function">
    <text evidence="5 7">Receptor that mediates the recognition, internalization and degradation of oxidatively modified low density lipoprotein (oxLDL) by vascular endothelial cells. OxLDL is a marker of atherosclerosis that induces vascular endothelial cell activation and dysfunction, resulting in pro-inflammatory responses, pro-oxidative conditions and apoptosis. Its association with oxLDL induces the activation of NF-kappa-B through an increased production of intracellular reactive oxygen and a variety of pro-atherogenic cellular responses including a reduction of nitric oxide (NO) release, monocyte adhesion and apoptosis. In addition to binding oxLDL, it acts as a receptor for the HSP70 protein involved in antigen cross-presentation to naive T-cells in dendritic cells, thereby participating in cell-mediated antigen cross-presentation. Also involved in inflammatory process, by acting as a leukocyte-adhesion molecule at the vascular interface in endotoxin-induced inflammation. Also acts as a receptor for advanced glycation end (AGE) products, activated platelets, monocytes, apoptotic cells and both Gram-negative and Gram-positive bacteria.</text>
</comment>
<comment type="subunit">
    <text evidence="1">Homodimer; disulfide-linked. May form a hexamer composed of 3 homodimers. Interacts with HSP70 (By similarity).</text>
</comment>
<comment type="subcellular location">
    <subcellularLocation>
        <location evidence="1">Cell membrane</location>
        <topology evidence="1">Lipid-anchor</topology>
    </subcellularLocation>
    <subcellularLocation>
        <location evidence="1">Cell membrane</location>
        <topology evidence="1">Single-pass type II membrane protein</topology>
    </subcellularLocation>
    <subcellularLocation>
        <location evidence="1">Membrane raft</location>
    </subcellularLocation>
    <subcellularLocation>
        <location evidence="1">Secreted</location>
    </subcellularLocation>
    <text evidence="1">A secreted form also exists. Localization to membrane rafts requires palmitoylation (By similarity).</text>
</comment>
<comment type="tissue specificity">
    <text evidence="6">Predominantly expressed in lung and at lower level in kidney. Expressed in macrophages but not in vascular smooth muscle cells.</text>
</comment>
<comment type="induction">
    <text evidence="6 7">By hypertension. Up-regulated by shear stress, lipopolysaccharide and TNF-alpha in cultured vascular endothelial cells.</text>
</comment>
<comment type="domain">
    <text evidence="1">The cytoplasmic region is required for subcellular sorting on the cell surface.</text>
</comment>
<comment type="domain">
    <text evidence="1">The C-type lectin domain mediates the recognition and binding of oxLDL.</text>
</comment>
<comment type="domain">
    <text>The Neck region contains 3 internal repeats that are only found in rodents.</text>
</comment>
<comment type="PTM">
    <text evidence="1">N-glycosylated.</text>
</comment>
<name>OLR1_RAT</name>
<reference key="1">
    <citation type="journal article" date="1998" name="Biochem. J.">
        <title>Unique repetitive sequence and unexpected regulation of expression of rat endothelial receptor for oxidized low-density lipoprotein (LOX-1).</title>
        <authorList>
            <person name="Nagase M."/>
            <person name="Hirose S."/>
            <person name="Fujita T."/>
        </authorList>
    </citation>
    <scope>NUCLEOTIDE SEQUENCE [MRNA]</scope>
    <scope>TISSUE SPECIFICITY</scope>
    <scope>INDUCTION</scope>
    <source>
        <strain>SHR</strain>
        <tissue>Kidney</tissue>
    </source>
</reference>
<reference key="2">
    <citation type="journal article" date="1998" name="J. Biol. Chem.">
        <title>Genomic organization and regulation of expression of the lectin-like oxidized low-density lipoprotein receptor (LOX-1) gene.</title>
        <authorList>
            <person name="Nagase M."/>
            <person name="Abe J."/>
            <person name="Takahashi K."/>
            <person name="Ando J."/>
            <person name="Hirose S."/>
            <person name="Fujita T."/>
        </authorList>
    </citation>
    <scope>NUCLEOTIDE SEQUENCE [GENOMIC DNA]</scope>
    <scope>FUNCTION</scope>
    <scope>INDUCTION</scope>
    <source>
        <strain>Sprague-Dawley</strain>
        <tissue>Liver</tissue>
    </source>
</reference>
<reference key="3">
    <citation type="journal article" date="2004" name="Genome Res.">
        <title>The status, quality, and expansion of the NIH full-length cDNA project: the Mammalian Gene Collection (MGC).</title>
        <authorList>
            <consortium name="The MGC Project Team"/>
        </authorList>
    </citation>
    <scope>NUCLEOTIDE SEQUENCE [LARGE SCALE MRNA]</scope>
    <source>
        <tissue>Placenta</tissue>
    </source>
</reference>
<reference key="4">
    <citation type="journal article" date="2003" name="Proc. Natl. Acad. Sci. U.S.A.">
        <title>Lectin-like oxidized LDL receptor-1 is a cell-adhesion molecule involved in endotoxin-induced inflammation.</title>
        <authorList>
            <person name="Honjo M."/>
            <person name="Nakamura K."/>
            <person name="Yamashiro K."/>
            <person name="Kiryu J."/>
            <person name="Tanihara H."/>
            <person name="McEvoy L.M."/>
            <person name="Honda Y."/>
            <person name="Butcher E.C."/>
            <person name="Masaki T."/>
            <person name="Sawamura T."/>
        </authorList>
    </citation>
    <scope>FUNCTION</scope>
</reference>
<keyword id="KW-0130">Cell adhesion</keyword>
<keyword id="KW-1003">Cell membrane</keyword>
<keyword id="KW-0175">Coiled coil</keyword>
<keyword id="KW-1015">Disulfide bond</keyword>
<keyword id="KW-0325">Glycoprotein</keyword>
<keyword id="KW-0391">Immunity</keyword>
<keyword id="KW-0395">Inflammatory response</keyword>
<keyword id="KW-0430">Lectin</keyword>
<keyword id="KW-0449">Lipoprotein</keyword>
<keyword id="KW-0472">Membrane</keyword>
<keyword id="KW-0564">Palmitate</keyword>
<keyword id="KW-0675">Receptor</keyword>
<keyword id="KW-1185">Reference proteome</keyword>
<keyword id="KW-0677">Repeat</keyword>
<keyword id="KW-0964">Secreted</keyword>
<keyword id="KW-0735">Signal-anchor</keyword>
<keyword id="KW-0812">Transmembrane</keyword>
<keyword id="KW-1133">Transmembrane helix</keyword>
<evidence type="ECO:0000250" key="1"/>
<evidence type="ECO:0000255" key="2"/>
<evidence type="ECO:0000255" key="3">
    <source>
        <dbReference type="PROSITE-ProRule" id="PRU00040"/>
    </source>
</evidence>
<evidence type="ECO:0000256" key="4">
    <source>
        <dbReference type="SAM" id="MobiDB-lite"/>
    </source>
</evidence>
<evidence type="ECO:0000269" key="5">
    <source>
    </source>
</evidence>
<evidence type="ECO:0000269" key="6">
    <source>
    </source>
</evidence>
<evidence type="ECO:0000269" key="7">
    <source>
    </source>
</evidence>
<organism>
    <name type="scientific">Rattus norvegicus</name>
    <name type="common">Rat</name>
    <dbReference type="NCBI Taxonomy" id="10116"/>
    <lineage>
        <taxon>Eukaryota</taxon>
        <taxon>Metazoa</taxon>
        <taxon>Chordata</taxon>
        <taxon>Craniata</taxon>
        <taxon>Vertebrata</taxon>
        <taxon>Euteleostomi</taxon>
        <taxon>Mammalia</taxon>
        <taxon>Eutheria</taxon>
        <taxon>Euarchontoglires</taxon>
        <taxon>Glires</taxon>
        <taxon>Rodentia</taxon>
        <taxon>Myomorpha</taxon>
        <taxon>Muroidea</taxon>
        <taxon>Muridae</taxon>
        <taxon>Murinae</taxon>
        <taxon>Rattus</taxon>
    </lineage>
</organism>
<protein>
    <recommendedName>
        <fullName>Oxidized low-density lipoprotein receptor 1</fullName>
        <shortName>Ox-LDL receptor 1</shortName>
    </recommendedName>
    <alternativeName>
        <fullName>Lectin-like oxidized LDL receptor 1</fullName>
        <shortName>LOX-1</shortName>
        <shortName>Lectin-like oxLDL receptor 1</shortName>
    </alternativeName>
    <alternativeName>
        <fullName>Lectin-type oxidized LDL receptor 1</fullName>
    </alternativeName>
    <component>
        <recommendedName>
            <fullName>Oxidized low-density lipoprotein receptor 1, soluble form</fullName>
        </recommendedName>
    </component>
</protein>